<proteinExistence type="inferred from homology"/>
<accession>C3N187</accession>
<sequence>MVEKHLLEFLEKLQFLIAKNVKISHYGIENVKKICGVDIAYKGNLGFSVGVSMDINSGDYNYKSYVGEVNFPYIPGFLFMREAPLMIKAIEGLDCHLLLVDGHGIAHPRKSGIAAVIGVLLDFPTIGVAKSRLTGDLVNESEITYVYLNGEKVGVKFGRYFYSPGNKVDLQDCIELGKRGYPKVLKIADMLTKKTKKE</sequence>
<organism>
    <name type="scientific">Saccharolobus islandicus (strain M.16.27)</name>
    <name type="common">Sulfolobus islandicus</name>
    <dbReference type="NCBI Taxonomy" id="427318"/>
    <lineage>
        <taxon>Archaea</taxon>
        <taxon>Thermoproteota</taxon>
        <taxon>Thermoprotei</taxon>
        <taxon>Sulfolobales</taxon>
        <taxon>Sulfolobaceae</taxon>
        <taxon>Saccharolobus</taxon>
    </lineage>
</organism>
<comment type="function">
    <text evidence="1">DNA repair enzyme involved in the repair of deaminated bases. Selectively cleaves double-stranded DNA at the second phosphodiester bond 3' to a deoxyinosine leaving behind the intact lesion on the nicked DNA.</text>
</comment>
<comment type="catalytic activity">
    <reaction evidence="1">
        <text>Endonucleolytic cleavage at apurinic or apyrimidinic sites to products with a 5'-phosphate.</text>
        <dbReference type="EC" id="3.1.21.7"/>
    </reaction>
</comment>
<comment type="cofactor">
    <cofactor evidence="1">
        <name>Mg(2+)</name>
        <dbReference type="ChEBI" id="CHEBI:18420"/>
    </cofactor>
</comment>
<comment type="subcellular location">
    <subcellularLocation>
        <location evidence="1">Cytoplasm</location>
    </subcellularLocation>
</comment>
<comment type="similarity">
    <text evidence="1">Belongs to the endonuclease V family.</text>
</comment>
<feature type="chain" id="PRO_1000212977" description="Endonuclease V">
    <location>
        <begin position="1"/>
        <end position="198"/>
    </location>
</feature>
<feature type="binding site" evidence="1">
    <location>
        <position position="38"/>
    </location>
    <ligand>
        <name>Mg(2+)</name>
        <dbReference type="ChEBI" id="CHEBI:18420"/>
    </ligand>
</feature>
<feature type="binding site" evidence="1">
    <location>
        <position position="101"/>
    </location>
    <ligand>
        <name>Mg(2+)</name>
        <dbReference type="ChEBI" id="CHEBI:18420"/>
    </ligand>
</feature>
<feature type="site" description="Interaction with target DNA" evidence="1">
    <location>
        <position position="73"/>
    </location>
</feature>
<evidence type="ECO:0000255" key="1">
    <source>
        <dbReference type="HAMAP-Rule" id="MF_00801"/>
    </source>
</evidence>
<keyword id="KW-0963">Cytoplasm</keyword>
<keyword id="KW-0227">DNA damage</keyword>
<keyword id="KW-0234">DNA repair</keyword>
<keyword id="KW-0255">Endonuclease</keyword>
<keyword id="KW-0378">Hydrolase</keyword>
<keyword id="KW-0460">Magnesium</keyword>
<keyword id="KW-0479">Metal-binding</keyword>
<keyword id="KW-0540">Nuclease</keyword>
<dbReference type="EC" id="3.1.21.7" evidence="1"/>
<dbReference type="EMBL" id="CP001401">
    <property type="protein sequence ID" value="ACP54272.1"/>
    <property type="molecule type" value="Genomic_DNA"/>
</dbReference>
<dbReference type="RefSeq" id="WP_012718354.1">
    <property type="nucleotide sequence ID" value="NC_012632.1"/>
</dbReference>
<dbReference type="SMR" id="C3N187"/>
<dbReference type="KEGG" id="sim:M1627_0243"/>
<dbReference type="HOGENOM" id="CLU_047631_1_1_2"/>
<dbReference type="Proteomes" id="UP000002307">
    <property type="component" value="Chromosome"/>
</dbReference>
<dbReference type="GO" id="GO:0005737">
    <property type="term" value="C:cytoplasm"/>
    <property type="evidence" value="ECO:0007669"/>
    <property type="project" value="UniProtKB-SubCell"/>
</dbReference>
<dbReference type="GO" id="GO:0043737">
    <property type="term" value="F:deoxyribonuclease V activity"/>
    <property type="evidence" value="ECO:0007669"/>
    <property type="project" value="UniProtKB-UniRule"/>
</dbReference>
<dbReference type="GO" id="GO:0000287">
    <property type="term" value="F:magnesium ion binding"/>
    <property type="evidence" value="ECO:0007669"/>
    <property type="project" value="UniProtKB-UniRule"/>
</dbReference>
<dbReference type="GO" id="GO:0016891">
    <property type="term" value="F:RNA endonuclease activity, producing 5'-phosphomonoesters"/>
    <property type="evidence" value="ECO:0007669"/>
    <property type="project" value="TreeGrafter"/>
</dbReference>
<dbReference type="GO" id="GO:0003727">
    <property type="term" value="F:single-stranded RNA binding"/>
    <property type="evidence" value="ECO:0007669"/>
    <property type="project" value="TreeGrafter"/>
</dbReference>
<dbReference type="GO" id="GO:0006281">
    <property type="term" value="P:DNA repair"/>
    <property type="evidence" value="ECO:0007669"/>
    <property type="project" value="UniProtKB-UniRule"/>
</dbReference>
<dbReference type="CDD" id="cd06559">
    <property type="entry name" value="Endonuclease_V"/>
    <property type="match status" value="1"/>
</dbReference>
<dbReference type="Gene3D" id="3.30.2170.10">
    <property type="entry name" value="archaeoglobus fulgidus dsm 4304 superfamily"/>
    <property type="match status" value="1"/>
</dbReference>
<dbReference type="HAMAP" id="MF_00801">
    <property type="entry name" value="Endonuclease_5"/>
    <property type="match status" value="1"/>
</dbReference>
<dbReference type="InterPro" id="IPR007581">
    <property type="entry name" value="Endonuclease-V"/>
</dbReference>
<dbReference type="PANTHER" id="PTHR28511">
    <property type="entry name" value="ENDONUCLEASE V"/>
    <property type="match status" value="1"/>
</dbReference>
<dbReference type="PANTHER" id="PTHR28511:SF1">
    <property type="entry name" value="ENDONUCLEASE V"/>
    <property type="match status" value="1"/>
</dbReference>
<dbReference type="Pfam" id="PF04493">
    <property type="entry name" value="Endonuclease_5"/>
    <property type="match status" value="1"/>
</dbReference>
<name>NFI_SACI3</name>
<protein>
    <recommendedName>
        <fullName evidence="1">Endonuclease V</fullName>
        <ecNumber evidence="1">3.1.21.7</ecNumber>
    </recommendedName>
    <alternativeName>
        <fullName evidence="1">Deoxyinosine 3'endonuclease</fullName>
    </alternativeName>
    <alternativeName>
        <fullName evidence="1">Deoxyribonuclease V</fullName>
        <shortName evidence="1">DNase V</shortName>
    </alternativeName>
</protein>
<reference key="1">
    <citation type="journal article" date="2009" name="Proc. Natl. Acad. Sci. U.S.A.">
        <title>Biogeography of the Sulfolobus islandicus pan-genome.</title>
        <authorList>
            <person name="Reno M.L."/>
            <person name="Held N.L."/>
            <person name="Fields C.J."/>
            <person name="Burke P.V."/>
            <person name="Whitaker R.J."/>
        </authorList>
    </citation>
    <scope>NUCLEOTIDE SEQUENCE [LARGE SCALE GENOMIC DNA]</scope>
    <source>
        <strain>M.16.27</strain>
    </source>
</reference>
<gene>
    <name evidence="1" type="primary">nfi</name>
    <name type="ordered locus">M1627_0243</name>
</gene>